<dbReference type="EMBL" id="AF158817">
    <property type="protein sequence ID" value="AAD44969.1"/>
    <property type="molecule type" value="mRNA"/>
</dbReference>
<dbReference type="EMBL" id="AF158819">
    <property type="protein sequence ID" value="AAD44971.1"/>
    <property type="molecule type" value="mRNA"/>
</dbReference>
<dbReference type="SMR" id="P56832"/>
<dbReference type="Proteomes" id="UP000002356">
    <property type="component" value="Unplaced"/>
</dbReference>
<dbReference type="GO" id="GO:0005615">
    <property type="term" value="C:extracellular space"/>
    <property type="evidence" value="ECO:0007669"/>
    <property type="project" value="UniProtKB-KW"/>
</dbReference>
<dbReference type="GO" id="GO:0005125">
    <property type="term" value="F:cytokine activity"/>
    <property type="evidence" value="ECO:0007669"/>
    <property type="project" value="UniProtKB-KW"/>
</dbReference>
<dbReference type="GO" id="GO:0005126">
    <property type="term" value="F:cytokine receptor binding"/>
    <property type="evidence" value="ECO:0007669"/>
    <property type="project" value="InterPro"/>
</dbReference>
<dbReference type="GO" id="GO:0005179">
    <property type="term" value="F:hormone activity"/>
    <property type="evidence" value="ECO:0007669"/>
    <property type="project" value="UniProtKB-KW"/>
</dbReference>
<dbReference type="GO" id="GO:0051607">
    <property type="term" value="P:defense response to virus"/>
    <property type="evidence" value="ECO:0007669"/>
    <property type="project" value="UniProtKB-KW"/>
</dbReference>
<dbReference type="GO" id="GO:0007565">
    <property type="term" value="P:female pregnancy"/>
    <property type="evidence" value="ECO:0007669"/>
    <property type="project" value="UniProtKB-KW"/>
</dbReference>
<dbReference type="CDD" id="cd00095">
    <property type="entry name" value="IFab"/>
    <property type="match status" value="1"/>
</dbReference>
<dbReference type="FunFam" id="1.20.1250.10:FF:000001">
    <property type="entry name" value="Interferon alpha"/>
    <property type="match status" value="1"/>
</dbReference>
<dbReference type="Gene3D" id="1.20.1250.10">
    <property type="match status" value="1"/>
</dbReference>
<dbReference type="InterPro" id="IPR009079">
    <property type="entry name" value="4_helix_cytokine-like_core"/>
</dbReference>
<dbReference type="InterPro" id="IPR000471">
    <property type="entry name" value="Interferon_alpha/beta/delta"/>
</dbReference>
<dbReference type="PANTHER" id="PTHR11691:SF37">
    <property type="entry name" value="INTERFERON OMEGA-1"/>
    <property type="match status" value="1"/>
</dbReference>
<dbReference type="PANTHER" id="PTHR11691">
    <property type="entry name" value="TYPE I INTERFERON"/>
    <property type="match status" value="1"/>
</dbReference>
<dbReference type="Pfam" id="PF00143">
    <property type="entry name" value="Interferon"/>
    <property type="match status" value="1"/>
</dbReference>
<dbReference type="PRINTS" id="PR00266">
    <property type="entry name" value="INTERFERONAB"/>
</dbReference>
<dbReference type="SMART" id="SM00076">
    <property type="entry name" value="IFabd"/>
    <property type="match status" value="1"/>
</dbReference>
<dbReference type="SUPFAM" id="SSF47266">
    <property type="entry name" value="4-helical cytokines"/>
    <property type="match status" value="1"/>
</dbReference>
<dbReference type="PROSITE" id="PS00252">
    <property type="entry name" value="INTERFERON_A_B_D"/>
    <property type="match status" value="1"/>
</dbReference>
<proteinExistence type="evidence at transcript level"/>
<organism>
    <name type="scientific">Ovis aries</name>
    <name type="common">Sheep</name>
    <dbReference type="NCBI Taxonomy" id="9940"/>
    <lineage>
        <taxon>Eukaryota</taxon>
        <taxon>Metazoa</taxon>
        <taxon>Chordata</taxon>
        <taxon>Craniata</taxon>
        <taxon>Vertebrata</taxon>
        <taxon>Euteleostomi</taxon>
        <taxon>Mammalia</taxon>
        <taxon>Eutheria</taxon>
        <taxon>Laurasiatheria</taxon>
        <taxon>Artiodactyla</taxon>
        <taxon>Ruminantia</taxon>
        <taxon>Pecora</taxon>
        <taxon>Bovidae</taxon>
        <taxon>Caprinae</taxon>
        <taxon>Ovis</taxon>
    </lineage>
</organism>
<accession>P56832</accession>
<feature type="chain" id="PRO_0000154309" description="Interferon tau-3">
    <location>
        <begin position="1"/>
        <end position="172"/>
    </location>
</feature>
<feature type="disulfide bond" evidence="1">
    <location>
        <begin position="1"/>
        <end position="99"/>
    </location>
</feature>
<feature type="disulfide bond" evidence="1">
    <location>
        <begin position="29"/>
        <end position="139"/>
    </location>
</feature>
<feature type="sequence variant" description="In IFN-tau3B." evidence="3">
    <original>T</original>
    <variation>S</variation>
    <location>
        <position position="87"/>
    </location>
</feature>
<feature type="sequence variant" description="In IFN-tau3B." evidence="3">
    <original>FE</original>
    <variation>SQ</variation>
    <location>
        <begin position="124"/>
        <end position="125"/>
    </location>
</feature>
<feature type="sequence variant" description="In IFN-tau3B." evidence="3">
    <original>L</original>
    <variation>Y</variation>
    <location>
        <position position="130"/>
    </location>
</feature>
<keyword id="KW-0051">Antiviral defense</keyword>
<keyword id="KW-0202">Cytokine</keyword>
<keyword id="KW-1015">Disulfide bond</keyword>
<keyword id="KW-0372">Hormone</keyword>
<keyword id="KW-0635">Pregnancy</keyword>
<keyword id="KW-1185">Reference proteome</keyword>
<keyword id="KW-0964">Secreted</keyword>
<reference key="1">
    <citation type="submission" date="1999-06" db="EMBL/GenBank/DDBJ databases">
        <title>Identification of the expressed forms of ovine interferon-tau in the peri-implantation conceptus: sequence relationships and comparative biological activities.</title>
        <authorList>
            <person name="Winkelman G.L."/>
            <person name="Roberts R.M."/>
            <person name="Peterson A.J."/>
            <person name="Alexenko A.P."/>
            <person name="Ealy A.D."/>
        </authorList>
    </citation>
    <scope>NUCLEOTIDE SEQUENCE [MRNA]</scope>
    <scope>VARIANTS SER-87; 124-PHE-GLU-125 DELINS SER-GLN AND TYR-130</scope>
    <source>
        <tissue>Embryo</tissue>
    </source>
</reference>
<reference key="2">
    <citation type="journal article" date="1996" name="Endocrinology">
        <title>Ovine interferon tau suppresses transcription of the estrogen receptor and oxytocin receptor genes in the ovine endometrium.</title>
        <authorList>
            <person name="Spencer T.E."/>
            <person name="Bazer F.W."/>
        </authorList>
    </citation>
    <scope>FUNCTION</scope>
</reference>
<reference key="3">
    <citation type="journal article" date="1994" name="Protein Eng.">
        <title>Predicted structural motif of IFN tau.</title>
        <authorList>
            <person name="Jarpe M.A."/>
            <person name="Johnson H.M."/>
            <person name="Bazer F.W."/>
            <person name="Ott T.L."/>
            <person name="Curto E.V."/>
            <person name="Krishna N.R."/>
            <person name="Pontzer C.H."/>
        </authorList>
    </citation>
    <scope>CIRCULAR DICHROISM ANALYSIS</scope>
    <scope>3D-STRUCTURE MODELING</scope>
</reference>
<reference key="4">
    <citation type="journal article" date="1995" name="J. Interferon Cytokine Res.">
        <title>A three-dimensional model of interferon-tau.</title>
        <authorList>
            <person name="Senda T."/>
            <person name="Saitoh S."/>
            <person name="Mitsui Y."/>
            <person name="Li J."/>
            <person name="Roberts R.M."/>
        </authorList>
    </citation>
    <scope>3D-STRUCTURE MODELING</scope>
</reference>
<reference key="5">
    <citation type="journal article" date="1998" name="Biochimie">
        <title>IFN-tau: a novel subtype I IFN1. Structural characteristics, non-ubiquitous expression, structure-function relationships, a pregnancy hormonal embryonic signal and cross-species therapeutic potentialities.</title>
        <authorList>
            <person name="Martal J.L."/>
            <person name="Chene N.M."/>
            <person name="Huynh L.P."/>
            <person name="L'Haridon R.M."/>
            <person name="Reinaud P.B."/>
            <person name="Guillomot M.W."/>
            <person name="Charlier M.A."/>
            <person name="Charpigny S.Y."/>
        </authorList>
    </citation>
    <scope>REVIEW</scope>
</reference>
<sequence length="172" mass="19867">CYLSERLMLDARENLKLLDRMNRLSPHSCLQDRKDFGLPQEMVEGDQLQKDQAFPVLYEMLQQSFNLFYTEHSSAAWDTTLLEQLCTGLQQQLDHLDTCRGQVMGEEDSELGNMDPIVTVKKYFEGIYDLLQEKGYSDCAWEIVRVEMMRALTVSTTLQKRLTKMGGDLNSP</sequence>
<gene>
    <name type="primary">IFNT3</name>
</gene>
<protein>
    <recommendedName>
        <fullName>Interferon tau-3</fullName>
        <shortName>IFN-tau-3</shortName>
    </recommendedName>
    <alternativeName>
        <fullName>Antiluteolysin</fullName>
    </alternativeName>
    <alternativeName>
        <fullName>Trophoblast antiluteolytic protein</fullName>
    </alternativeName>
    <alternativeName>
        <fullName>Trophoblast protein 1</fullName>
        <shortName>TP-1</shortName>
    </alternativeName>
    <alternativeName>
        <fullName>Trophoblastin</fullName>
    </alternativeName>
</protein>
<evidence type="ECO:0000250" key="1"/>
<evidence type="ECO:0000269" key="2">
    <source>
    </source>
</evidence>
<evidence type="ECO:0000269" key="3">
    <source ref="1"/>
</evidence>
<evidence type="ECO:0000305" key="4"/>
<comment type="function">
    <text evidence="2">Paracrine hormone primarily responsible for maternal recognition of pregnancy. Interacts with endometrial receptors, probably type I interferon receptors, and blocks estrogen receptor expression, preventing the estrogen-induced increase in oxytocin receptor expression in the endometrium. This results in the suppression of the pulsatile endometrial release of the luteolytic hormone prostaglandin F2-alpha, hindering the regression of the corpus luteum (luteolysis) and therefore a return to ovarian cyclicity. This, and a possible direct effect of IFN-tau on prostaglandin synthesis, leads in turn to continued ovarian progesterone secretion, which stimulates the secretion by the endometrium of the nutrients required for the growth of the conceptus. In summary, displays particularly high antiviral and antiproliferative potency concurrently with particular weak cytotoxicity, high antiluteolytic activity and immunomodulatory properties. In contrast with other IFNs, IFN-tau is not virally inducible.</text>
</comment>
<comment type="subcellular location">
    <subcellularLocation>
        <location>Secreted</location>
    </subcellularLocation>
    <text>Secreted into the uterine lumen.</text>
</comment>
<comment type="tissue specificity">
    <text>Constitutively and exclusively expressed in the mononuclear cells of the extraembryonic trophectoderm.</text>
</comment>
<comment type="developmental stage">
    <text>Major secretory product synthesized by the sheep conceptus between days 13 and 21 of pregnancy.</text>
</comment>
<comment type="polymorphism">
    <text evidence="3">There seem to be two variants of IFN-tau 3: A/P8V1 (shown here) and B/P8V3.</text>
</comment>
<comment type="miscellaneous">
    <text>IFN-tau genes are intronless. They evolved from IFN-omega genes in the ruminantia suborder and have continued to duplicate independently in different lineages of the ruminantia. They code for proteins very similar in sequence but with different biological potency and pattern of expression.</text>
</comment>
<comment type="similarity">
    <text evidence="4">Belongs to the alpha/beta interferon family. IFN-alphaII subfamily.</text>
</comment>
<name>IFNT3_SHEEP</name>